<accession>C4KH38</accession>
<keyword id="KW-0963">Cytoplasm</keyword>
<keyword id="KW-0240">DNA-directed RNA polymerase</keyword>
<keyword id="KW-0548">Nucleotidyltransferase</keyword>
<keyword id="KW-0804">Transcription</keyword>
<keyword id="KW-0808">Transferase</keyword>
<comment type="function">
    <text evidence="1">DNA-dependent RNA polymerase (RNAP) catalyzes the transcription of DNA into RNA using the four ribonucleoside triphosphates as substrates.</text>
</comment>
<comment type="catalytic activity">
    <reaction evidence="1">
        <text>RNA(n) + a ribonucleoside 5'-triphosphate = RNA(n+1) + diphosphate</text>
        <dbReference type="Rhea" id="RHEA:21248"/>
        <dbReference type="Rhea" id="RHEA-COMP:14527"/>
        <dbReference type="Rhea" id="RHEA-COMP:17342"/>
        <dbReference type="ChEBI" id="CHEBI:33019"/>
        <dbReference type="ChEBI" id="CHEBI:61557"/>
        <dbReference type="ChEBI" id="CHEBI:140395"/>
        <dbReference type="EC" id="2.7.7.6"/>
    </reaction>
</comment>
<comment type="subunit">
    <text evidence="1">Part of the RNA polymerase complex.</text>
</comment>
<comment type="subcellular location">
    <subcellularLocation>
        <location evidence="1">Cytoplasm</location>
    </subcellularLocation>
</comment>
<comment type="similarity">
    <text evidence="1">Belongs to the archaeal Rpo6/eukaryotic RPB6 RNA polymerase subunit family.</text>
</comment>
<gene>
    <name evidence="1" type="primary">rpo6</name>
    <name evidence="1" type="synonym">rpoK</name>
    <name type="ordered locus">M164_1297</name>
</gene>
<feature type="chain" id="PRO_1000204014" description="DNA-directed RNA polymerase subunit Rpo6">
    <location>
        <begin position="1"/>
        <end position="95"/>
    </location>
</feature>
<sequence>MGLERDGILSQDLHFNEVFVSLWQNKLTRYEIARVISARALQLAMGAPALIDINNISLTDVISIAEEEFKRGVLPITIRRRLPNGKIILLSLRKS</sequence>
<reference key="1">
    <citation type="journal article" date="2009" name="Proc. Natl. Acad. Sci. U.S.A.">
        <title>Biogeography of the Sulfolobus islandicus pan-genome.</title>
        <authorList>
            <person name="Reno M.L."/>
            <person name="Held N.L."/>
            <person name="Fields C.J."/>
            <person name="Burke P.V."/>
            <person name="Whitaker R.J."/>
        </authorList>
    </citation>
    <scope>NUCLEOTIDE SEQUENCE [LARGE SCALE GENOMIC DNA]</scope>
    <source>
        <strain>M.16.4 / Kamchatka #3</strain>
    </source>
</reference>
<dbReference type="EC" id="2.7.7.6" evidence="1"/>
<dbReference type="EMBL" id="CP001402">
    <property type="protein sequence ID" value="ACR41902.1"/>
    <property type="molecule type" value="Genomic_DNA"/>
</dbReference>
<dbReference type="RefSeq" id="WP_012711319.1">
    <property type="nucleotide sequence ID" value="NC_012726.1"/>
</dbReference>
<dbReference type="SMR" id="C4KH38"/>
<dbReference type="KEGG" id="sid:M164_1297"/>
<dbReference type="HOGENOM" id="CLU_112527_4_0_2"/>
<dbReference type="Proteomes" id="UP000001479">
    <property type="component" value="Chromosome"/>
</dbReference>
<dbReference type="GO" id="GO:0005737">
    <property type="term" value="C:cytoplasm"/>
    <property type="evidence" value="ECO:0007669"/>
    <property type="project" value="UniProtKB-SubCell"/>
</dbReference>
<dbReference type="GO" id="GO:0000428">
    <property type="term" value="C:DNA-directed RNA polymerase complex"/>
    <property type="evidence" value="ECO:0007669"/>
    <property type="project" value="UniProtKB-KW"/>
</dbReference>
<dbReference type="GO" id="GO:0003677">
    <property type="term" value="F:DNA binding"/>
    <property type="evidence" value="ECO:0007669"/>
    <property type="project" value="UniProtKB-UniRule"/>
</dbReference>
<dbReference type="GO" id="GO:0003899">
    <property type="term" value="F:DNA-directed RNA polymerase activity"/>
    <property type="evidence" value="ECO:0007669"/>
    <property type="project" value="UniProtKB-UniRule"/>
</dbReference>
<dbReference type="GO" id="GO:0006360">
    <property type="term" value="P:transcription by RNA polymerase I"/>
    <property type="evidence" value="ECO:0007669"/>
    <property type="project" value="TreeGrafter"/>
</dbReference>
<dbReference type="GO" id="GO:0006366">
    <property type="term" value="P:transcription by RNA polymerase II"/>
    <property type="evidence" value="ECO:0007669"/>
    <property type="project" value="TreeGrafter"/>
</dbReference>
<dbReference type="GO" id="GO:0042797">
    <property type="term" value="P:tRNA transcription by RNA polymerase III"/>
    <property type="evidence" value="ECO:0007669"/>
    <property type="project" value="TreeGrafter"/>
</dbReference>
<dbReference type="Gene3D" id="3.90.940.10">
    <property type="match status" value="1"/>
</dbReference>
<dbReference type="HAMAP" id="MF_00192">
    <property type="entry name" value="RNApol_arch_Rpo6"/>
    <property type="match status" value="1"/>
</dbReference>
<dbReference type="InterPro" id="IPR020708">
    <property type="entry name" value="DNA-dir_RNA_polK_14-18kDa_CS"/>
</dbReference>
<dbReference type="InterPro" id="IPR006110">
    <property type="entry name" value="Pol_omega/Rpo6/RPB6"/>
</dbReference>
<dbReference type="InterPro" id="IPR036161">
    <property type="entry name" value="RPB6/omega-like_sf"/>
</dbReference>
<dbReference type="InterPro" id="IPR006111">
    <property type="entry name" value="Rpo6/Rpb6"/>
</dbReference>
<dbReference type="NCBIfam" id="NF002207">
    <property type="entry name" value="PRK01099.1-2"/>
    <property type="match status" value="1"/>
</dbReference>
<dbReference type="NCBIfam" id="NF002208">
    <property type="entry name" value="PRK01099.1-3"/>
    <property type="match status" value="1"/>
</dbReference>
<dbReference type="NCBIfam" id="NF002209">
    <property type="entry name" value="PRK01099.1-4"/>
    <property type="match status" value="1"/>
</dbReference>
<dbReference type="PANTHER" id="PTHR47227">
    <property type="entry name" value="DNA-DIRECTED RNA POLYMERASE SUBUNIT K"/>
    <property type="match status" value="1"/>
</dbReference>
<dbReference type="PANTHER" id="PTHR47227:SF5">
    <property type="entry name" value="DNA-DIRECTED RNA POLYMERASES I, II, AND III SUBUNIT RPABC2"/>
    <property type="match status" value="1"/>
</dbReference>
<dbReference type="Pfam" id="PF01192">
    <property type="entry name" value="RNA_pol_Rpb6"/>
    <property type="match status" value="1"/>
</dbReference>
<dbReference type="SMART" id="SM01409">
    <property type="entry name" value="RNA_pol_Rpb6"/>
    <property type="match status" value="1"/>
</dbReference>
<dbReference type="SUPFAM" id="SSF63562">
    <property type="entry name" value="RPB6/omega subunit-like"/>
    <property type="match status" value="1"/>
</dbReference>
<dbReference type="PROSITE" id="PS01111">
    <property type="entry name" value="RNA_POL_K_14KD"/>
    <property type="match status" value="1"/>
</dbReference>
<proteinExistence type="inferred from homology"/>
<evidence type="ECO:0000255" key="1">
    <source>
        <dbReference type="HAMAP-Rule" id="MF_00192"/>
    </source>
</evidence>
<protein>
    <recommendedName>
        <fullName evidence="1">DNA-directed RNA polymerase subunit Rpo6</fullName>
        <ecNumber evidence="1">2.7.7.6</ecNumber>
    </recommendedName>
    <alternativeName>
        <fullName evidence="1">DNA-directed RNA polymerase subunit K</fullName>
    </alternativeName>
</protein>
<name>RPO6_SACI6</name>
<organism>
    <name type="scientific">Saccharolobus islandicus (strain M.16.4 / Kamchatka #3)</name>
    <name type="common">Sulfolobus islandicus</name>
    <dbReference type="NCBI Taxonomy" id="426118"/>
    <lineage>
        <taxon>Archaea</taxon>
        <taxon>Thermoproteota</taxon>
        <taxon>Thermoprotei</taxon>
        <taxon>Sulfolobales</taxon>
        <taxon>Sulfolobaceae</taxon>
        <taxon>Saccharolobus</taxon>
    </lineage>
</organism>